<feature type="chain" id="PRO_1000004754" description="Phosphomethylpyrimidine synthase">
    <location>
        <begin position="1"/>
        <end position="436"/>
    </location>
</feature>
<feature type="binding site" evidence="1">
    <location>
        <position position="69"/>
    </location>
    <ligand>
        <name>substrate</name>
    </ligand>
</feature>
<feature type="binding site" evidence="1">
    <location>
        <position position="98"/>
    </location>
    <ligand>
        <name>substrate</name>
    </ligand>
</feature>
<feature type="binding site" evidence="1">
    <location>
        <position position="127"/>
    </location>
    <ligand>
        <name>substrate</name>
    </ligand>
</feature>
<feature type="binding site" evidence="1">
    <location>
        <position position="163"/>
    </location>
    <ligand>
        <name>substrate</name>
    </ligand>
</feature>
<feature type="binding site" evidence="1">
    <location>
        <begin position="185"/>
        <end position="187"/>
    </location>
    <ligand>
        <name>substrate</name>
    </ligand>
</feature>
<feature type="binding site" evidence="1">
    <location>
        <begin position="226"/>
        <end position="229"/>
    </location>
    <ligand>
        <name>substrate</name>
    </ligand>
</feature>
<feature type="binding site" evidence="1">
    <location>
        <position position="265"/>
    </location>
    <ligand>
        <name>substrate</name>
    </ligand>
</feature>
<feature type="binding site" evidence="1">
    <location>
        <position position="269"/>
    </location>
    <ligand>
        <name>Zn(2+)</name>
        <dbReference type="ChEBI" id="CHEBI:29105"/>
    </ligand>
</feature>
<feature type="binding site" evidence="1">
    <location>
        <position position="292"/>
    </location>
    <ligand>
        <name>substrate</name>
    </ligand>
</feature>
<feature type="binding site" evidence="1">
    <location>
        <position position="333"/>
    </location>
    <ligand>
        <name>Zn(2+)</name>
        <dbReference type="ChEBI" id="CHEBI:29105"/>
    </ligand>
</feature>
<feature type="binding site" evidence="1">
    <location>
        <position position="409"/>
    </location>
    <ligand>
        <name>[4Fe-4S] cluster</name>
        <dbReference type="ChEBI" id="CHEBI:49883"/>
        <note>4Fe-4S-S-AdoMet</note>
    </ligand>
</feature>
<feature type="binding site" evidence="1">
    <location>
        <position position="412"/>
    </location>
    <ligand>
        <name>[4Fe-4S] cluster</name>
        <dbReference type="ChEBI" id="CHEBI:49883"/>
        <note>4Fe-4S-S-AdoMet</note>
    </ligand>
</feature>
<feature type="binding site" evidence="1">
    <location>
        <position position="416"/>
    </location>
    <ligand>
        <name>[4Fe-4S] cluster</name>
        <dbReference type="ChEBI" id="CHEBI:49883"/>
        <note>4Fe-4S-S-AdoMet</note>
    </ligand>
</feature>
<name>THIC_CLOP1</name>
<evidence type="ECO:0000255" key="1">
    <source>
        <dbReference type="HAMAP-Rule" id="MF_00089"/>
    </source>
</evidence>
<proteinExistence type="inferred from homology"/>
<sequence>MNYTTQMDAAKKGIITKEMQVVSEKEGINIETLMNLMAEGKIVIPANKNHKSISAEGVGQGLRTKINVNLGISKDCANIELELEKVKKAIDMNAESIMDLSNYGKTYDFRKRLVEVSTAMIGTVPMYDVVGFYDKELKDITVDEFFEVVEKHAKDGVDFVTIHAGLNRETIETFRRNKRLTNIVSRGGSLLFAWMELNNRENPFYEYFDRLLDICEKYDLTLSLGDACRPGSIADATDAVQIKELITLGELTKRAWERNVQVIIEGPGHMAMNEIEANVLLEKKLCHGAPFYVLGPIVTDIAPGYDHITSAIGGAMAASYGADFLCYVTPAEHLRLPNLEDVREGIVATKIAAHAADIAKGISGARDIDNKMSDARKRLDWDEMFSLAIDSEKAIRYRKESTPEHKDSCTMCGKMCSIRNMNKILEGKDINLLRED</sequence>
<accession>Q0TTB7</accession>
<gene>
    <name evidence="1" type="primary">thiC</name>
    <name type="ordered locus">CPF_0670</name>
</gene>
<protein>
    <recommendedName>
        <fullName evidence="1">Phosphomethylpyrimidine synthase</fullName>
        <ecNumber evidence="1">4.1.99.17</ecNumber>
    </recommendedName>
    <alternativeName>
        <fullName evidence="1">Hydroxymethylpyrimidine phosphate synthase</fullName>
        <shortName evidence="1">HMP-P synthase</shortName>
        <shortName evidence="1">HMP-phosphate synthase</shortName>
        <shortName evidence="1">HMPP synthase</shortName>
    </alternativeName>
    <alternativeName>
        <fullName evidence="1">Thiamine biosynthesis protein ThiC</fullName>
    </alternativeName>
</protein>
<organism>
    <name type="scientific">Clostridium perfringens (strain ATCC 13124 / DSM 756 / JCM 1290 / NCIMB 6125 / NCTC 8237 / Type A)</name>
    <dbReference type="NCBI Taxonomy" id="195103"/>
    <lineage>
        <taxon>Bacteria</taxon>
        <taxon>Bacillati</taxon>
        <taxon>Bacillota</taxon>
        <taxon>Clostridia</taxon>
        <taxon>Eubacteriales</taxon>
        <taxon>Clostridiaceae</taxon>
        <taxon>Clostridium</taxon>
    </lineage>
</organism>
<reference key="1">
    <citation type="journal article" date="2006" name="Genome Res.">
        <title>Skewed genomic variability in strains of the toxigenic bacterial pathogen, Clostridium perfringens.</title>
        <authorList>
            <person name="Myers G.S.A."/>
            <person name="Rasko D.A."/>
            <person name="Cheung J.K."/>
            <person name="Ravel J."/>
            <person name="Seshadri R."/>
            <person name="DeBoy R.T."/>
            <person name="Ren Q."/>
            <person name="Varga J."/>
            <person name="Awad M.M."/>
            <person name="Brinkac L.M."/>
            <person name="Daugherty S.C."/>
            <person name="Haft D.H."/>
            <person name="Dodson R.J."/>
            <person name="Madupu R."/>
            <person name="Nelson W.C."/>
            <person name="Rosovitz M.J."/>
            <person name="Sullivan S.A."/>
            <person name="Khouri H."/>
            <person name="Dimitrov G.I."/>
            <person name="Watkins K.L."/>
            <person name="Mulligan S."/>
            <person name="Benton J."/>
            <person name="Radune D."/>
            <person name="Fisher D.J."/>
            <person name="Atkins H.S."/>
            <person name="Hiscox T."/>
            <person name="Jost B.H."/>
            <person name="Billington S.J."/>
            <person name="Songer J.G."/>
            <person name="McClane B.A."/>
            <person name="Titball R.W."/>
            <person name="Rood J.I."/>
            <person name="Melville S.B."/>
            <person name="Paulsen I.T."/>
        </authorList>
    </citation>
    <scope>NUCLEOTIDE SEQUENCE [LARGE SCALE GENOMIC DNA]</scope>
    <source>
        <strain>ATCC 13124 / DSM 756 / JCM 1290 / NCIMB 6125 / NCTC 8237 / S 107 / Type A</strain>
    </source>
</reference>
<comment type="function">
    <text evidence="1">Catalyzes the synthesis of the hydroxymethylpyrimidine phosphate (HMP-P) moiety of thiamine from aminoimidazole ribotide (AIR) in a radical S-adenosyl-L-methionine (SAM)-dependent reaction.</text>
</comment>
<comment type="catalytic activity">
    <reaction evidence="1">
        <text>5-amino-1-(5-phospho-beta-D-ribosyl)imidazole + S-adenosyl-L-methionine = 4-amino-2-methyl-5-(phosphooxymethyl)pyrimidine + CO + 5'-deoxyadenosine + formate + L-methionine + 3 H(+)</text>
        <dbReference type="Rhea" id="RHEA:24840"/>
        <dbReference type="ChEBI" id="CHEBI:15378"/>
        <dbReference type="ChEBI" id="CHEBI:15740"/>
        <dbReference type="ChEBI" id="CHEBI:17245"/>
        <dbReference type="ChEBI" id="CHEBI:17319"/>
        <dbReference type="ChEBI" id="CHEBI:57844"/>
        <dbReference type="ChEBI" id="CHEBI:58354"/>
        <dbReference type="ChEBI" id="CHEBI:59789"/>
        <dbReference type="ChEBI" id="CHEBI:137981"/>
        <dbReference type="EC" id="4.1.99.17"/>
    </reaction>
</comment>
<comment type="cofactor">
    <cofactor evidence="1">
        <name>[4Fe-4S] cluster</name>
        <dbReference type="ChEBI" id="CHEBI:49883"/>
    </cofactor>
    <text evidence="1">Binds 1 [4Fe-4S] cluster per subunit. The cluster is coordinated with 3 cysteines and an exchangeable S-adenosyl-L-methionine.</text>
</comment>
<comment type="pathway">
    <text evidence="1">Cofactor biosynthesis; thiamine diphosphate biosynthesis.</text>
</comment>
<comment type="similarity">
    <text evidence="1">Belongs to the ThiC family.</text>
</comment>
<keyword id="KW-0004">4Fe-4S</keyword>
<keyword id="KW-0408">Iron</keyword>
<keyword id="KW-0411">Iron-sulfur</keyword>
<keyword id="KW-0456">Lyase</keyword>
<keyword id="KW-0479">Metal-binding</keyword>
<keyword id="KW-0949">S-adenosyl-L-methionine</keyword>
<keyword id="KW-0784">Thiamine biosynthesis</keyword>
<keyword id="KW-0862">Zinc</keyword>
<dbReference type="EC" id="4.1.99.17" evidence="1"/>
<dbReference type="EMBL" id="CP000246">
    <property type="protein sequence ID" value="ABG82595.1"/>
    <property type="molecule type" value="Genomic_DNA"/>
</dbReference>
<dbReference type="RefSeq" id="WP_003456962.1">
    <property type="nucleotide sequence ID" value="NC_008261.1"/>
</dbReference>
<dbReference type="SMR" id="Q0TTB7"/>
<dbReference type="STRING" id="195103.CPF_0670"/>
<dbReference type="PaxDb" id="195103-CPF_0670"/>
<dbReference type="GeneID" id="93002984"/>
<dbReference type="KEGG" id="cpf:CPF_0670"/>
<dbReference type="eggNOG" id="COG0422">
    <property type="taxonomic scope" value="Bacteria"/>
</dbReference>
<dbReference type="HOGENOM" id="CLU_013181_2_2_9"/>
<dbReference type="UniPathway" id="UPA00060"/>
<dbReference type="Proteomes" id="UP000001823">
    <property type="component" value="Chromosome"/>
</dbReference>
<dbReference type="GO" id="GO:0005829">
    <property type="term" value="C:cytosol"/>
    <property type="evidence" value="ECO:0007669"/>
    <property type="project" value="TreeGrafter"/>
</dbReference>
<dbReference type="GO" id="GO:0051539">
    <property type="term" value="F:4 iron, 4 sulfur cluster binding"/>
    <property type="evidence" value="ECO:0007669"/>
    <property type="project" value="UniProtKB-KW"/>
</dbReference>
<dbReference type="GO" id="GO:0016830">
    <property type="term" value="F:carbon-carbon lyase activity"/>
    <property type="evidence" value="ECO:0007669"/>
    <property type="project" value="InterPro"/>
</dbReference>
<dbReference type="GO" id="GO:0008270">
    <property type="term" value="F:zinc ion binding"/>
    <property type="evidence" value="ECO:0007669"/>
    <property type="project" value="UniProtKB-UniRule"/>
</dbReference>
<dbReference type="GO" id="GO:0009228">
    <property type="term" value="P:thiamine biosynthetic process"/>
    <property type="evidence" value="ECO:0007669"/>
    <property type="project" value="UniProtKB-KW"/>
</dbReference>
<dbReference type="GO" id="GO:0009229">
    <property type="term" value="P:thiamine diphosphate biosynthetic process"/>
    <property type="evidence" value="ECO:0007669"/>
    <property type="project" value="UniProtKB-UniRule"/>
</dbReference>
<dbReference type="FunFam" id="3.20.20.540:FF:000001">
    <property type="entry name" value="Phosphomethylpyrimidine synthase"/>
    <property type="match status" value="1"/>
</dbReference>
<dbReference type="Gene3D" id="6.10.250.620">
    <property type="match status" value="1"/>
</dbReference>
<dbReference type="Gene3D" id="3.20.20.540">
    <property type="entry name" value="Radical SAM ThiC family, central domain"/>
    <property type="match status" value="1"/>
</dbReference>
<dbReference type="HAMAP" id="MF_00089">
    <property type="entry name" value="ThiC"/>
    <property type="match status" value="1"/>
</dbReference>
<dbReference type="InterPro" id="IPR037509">
    <property type="entry name" value="ThiC"/>
</dbReference>
<dbReference type="InterPro" id="IPR038521">
    <property type="entry name" value="ThiC/Bza_core_dom"/>
</dbReference>
<dbReference type="InterPro" id="IPR002817">
    <property type="entry name" value="ThiC/BzaA/B"/>
</dbReference>
<dbReference type="NCBIfam" id="NF009895">
    <property type="entry name" value="PRK13352.1"/>
    <property type="match status" value="1"/>
</dbReference>
<dbReference type="NCBIfam" id="TIGR00190">
    <property type="entry name" value="thiC"/>
    <property type="match status" value="1"/>
</dbReference>
<dbReference type="PANTHER" id="PTHR30557:SF1">
    <property type="entry name" value="PHOSPHOMETHYLPYRIMIDINE SYNTHASE, CHLOROPLASTIC"/>
    <property type="match status" value="1"/>
</dbReference>
<dbReference type="PANTHER" id="PTHR30557">
    <property type="entry name" value="THIAMINE BIOSYNTHESIS PROTEIN THIC"/>
    <property type="match status" value="1"/>
</dbReference>
<dbReference type="Pfam" id="PF01964">
    <property type="entry name" value="ThiC_Rad_SAM"/>
    <property type="match status" value="1"/>
</dbReference>
<dbReference type="SFLD" id="SFLDF00407">
    <property type="entry name" value="phosphomethylpyrimidine_syntha"/>
    <property type="match status" value="1"/>
</dbReference>
<dbReference type="SFLD" id="SFLDG01114">
    <property type="entry name" value="phosphomethylpyrimidine_syntha"/>
    <property type="match status" value="1"/>
</dbReference>
<dbReference type="SFLD" id="SFLDS00113">
    <property type="entry name" value="Radical_SAM_Phosphomethylpyrim"/>
    <property type="match status" value="1"/>
</dbReference>